<gene>
    <name evidence="1" type="primary">araA</name>
    <name type="ordered locus">SEN0103</name>
</gene>
<sequence>MTIFDNYEVWFVIGSQHLYGAETLRQVTQHAEHVVNALNTEAKLPCKLVLKPLGTSPDEITAICRDANYDDRCAGLVVWLHTFSPAKMWINGLSILNKPLLQFHTQFNAALPWDSIDMDFMNLNQTAHGGREFGFIGARMRQQHSVVTGHWQDKEAHTRIGAWMRQAVSKQDTRQLKVCRFGDNMREVAVTDGDKVAAQIKFGFSVNTWAVGDLVQVVNAISDGDINALIDEYESSYTLTPATRIHGDKRQNVREAARIELGMKRFLEQGGFHAFTTTFEDLHGLKQLPGLAVQRLMQQGYGFAGEGDWKTAALLRIMKVMSTGLQGGTSFMEDYTYHFEKGNDLVLGSHMLEVCPSIAVEEKPILDVQHLGIGGKEDPARLIFNTQTGPAIVASLIDLGDRYRLLVNCIDTVKTPHSLPKLPVANALWKAQPDLPTASEAWILAGGAHHTVFSHALDLNDMRQFAEIHDIEIAVIDNDTRLPAFKDALRWNEVYYGFKR</sequence>
<keyword id="KW-0054">Arabinose catabolism</keyword>
<keyword id="KW-0119">Carbohydrate metabolism</keyword>
<keyword id="KW-0413">Isomerase</keyword>
<keyword id="KW-0464">Manganese</keyword>
<keyword id="KW-0479">Metal-binding</keyword>
<protein>
    <recommendedName>
        <fullName evidence="1">L-arabinose isomerase</fullName>
        <ecNumber evidence="1">5.3.1.4</ecNumber>
    </recommendedName>
</protein>
<evidence type="ECO:0000255" key="1">
    <source>
        <dbReference type="HAMAP-Rule" id="MF_00519"/>
    </source>
</evidence>
<reference key="1">
    <citation type="journal article" date="2008" name="Genome Res.">
        <title>Comparative genome analysis of Salmonella enteritidis PT4 and Salmonella gallinarum 287/91 provides insights into evolutionary and host adaptation pathways.</title>
        <authorList>
            <person name="Thomson N.R."/>
            <person name="Clayton D.J."/>
            <person name="Windhorst D."/>
            <person name="Vernikos G."/>
            <person name="Davidson S."/>
            <person name="Churcher C."/>
            <person name="Quail M.A."/>
            <person name="Stevens M."/>
            <person name="Jones M.A."/>
            <person name="Watson M."/>
            <person name="Barron A."/>
            <person name="Layton A."/>
            <person name="Pickard D."/>
            <person name="Kingsley R.A."/>
            <person name="Bignell A."/>
            <person name="Clark L."/>
            <person name="Harris B."/>
            <person name="Ormond D."/>
            <person name="Abdellah Z."/>
            <person name="Brooks K."/>
            <person name="Cherevach I."/>
            <person name="Chillingworth T."/>
            <person name="Woodward J."/>
            <person name="Norberczak H."/>
            <person name="Lord A."/>
            <person name="Arrowsmith C."/>
            <person name="Jagels K."/>
            <person name="Moule S."/>
            <person name="Mungall K."/>
            <person name="Saunders M."/>
            <person name="Whitehead S."/>
            <person name="Chabalgoity J.A."/>
            <person name="Maskell D."/>
            <person name="Humphreys T."/>
            <person name="Roberts M."/>
            <person name="Barrow P.A."/>
            <person name="Dougan G."/>
            <person name="Parkhill J."/>
        </authorList>
    </citation>
    <scope>NUCLEOTIDE SEQUENCE [LARGE SCALE GENOMIC DNA]</scope>
    <source>
        <strain>P125109</strain>
    </source>
</reference>
<proteinExistence type="inferred from homology"/>
<dbReference type="EC" id="5.3.1.4" evidence="1"/>
<dbReference type="EMBL" id="AM933172">
    <property type="protein sequence ID" value="CAR31690.1"/>
    <property type="molecule type" value="Genomic_DNA"/>
</dbReference>
<dbReference type="RefSeq" id="WP_000151703.1">
    <property type="nucleotide sequence ID" value="NC_011294.1"/>
</dbReference>
<dbReference type="SMR" id="B5R1T9"/>
<dbReference type="KEGG" id="set:SEN0103"/>
<dbReference type="HOGENOM" id="CLU_045663_0_0_6"/>
<dbReference type="UniPathway" id="UPA00145">
    <property type="reaction ID" value="UER00565"/>
</dbReference>
<dbReference type="Proteomes" id="UP000000613">
    <property type="component" value="Chromosome"/>
</dbReference>
<dbReference type="GO" id="GO:0005829">
    <property type="term" value="C:cytosol"/>
    <property type="evidence" value="ECO:0007669"/>
    <property type="project" value="TreeGrafter"/>
</dbReference>
<dbReference type="GO" id="GO:0008733">
    <property type="term" value="F:L-arabinose isomerase activity"/>
    <property type="evidence" value="ECO:0007669"/>
    <property type="project" value="UniProtKB-UniRule"/>
</dbReference>
<dbReference type="GO" id="GO:0030145">
    <property type="term" value="F:manganese ion binding"/>
    <property type="evidence" value="ECO:0007669"/>
    <property type="project" value="UniProtKB-UniRule"/>
</dbReference>
<dbReference type="GO" id="GO:0019569">
    <property type="term" value="P:L-arabinose catabolic process to xylulose 5-phosphate"/>
    <property type="evidence" value="ECO:0007669"/>
    <property type="project" value="UniProtKB-UniRule"/>
</dbReference>
<dbReference type="CDD" id="cd03557">
    <property type="entry name" value="L-arabinose_isomerase"/>
    <property type="match status" value="1"/>
</dbReference>
<dbReference type="FunFam" id="3.40.50.10940:FF:000001">
    <property type="entry name" value="L-arabinose isomerase"/>
    <property type="match status" value="1"/>
</dbReference>
<dbReference type="Gene3D" id="3.40.50.10940">
    <property type="match status" value="1"/>
</dbReference>
<dbReference type="HAMAP" id="MF_00519">
    <property type="entry name" value="Arabinose_Isome"/>
    <property type="match status" value="1"/>
</dbReference>
<dbReference type="InterPro" id="IPR024664">
    <property type="entry name" value="Ara_Isoase_C"/>
</dbReference>
<dbReference type="InterPro" id="IPR055390">
    <property type="entry name" value="AraA_central"/>
</dbReference>
<dbReference type="InterPro" id="IPR055389">
    <property type="entry name" value="AraA_N"/>
</dbReference>
<dbReference type="InterPro" id="IPR038583">
    <property type="entry name" value="AraA_N_sf"/>
</dbReference>
<dbReference type="InterPro" id="IPR004216">
    <property type="entry name" value="Fuc/Ara_isomerase_C"/>
</dbReference>
<dbReference type="InterPro" id="IPR009015">
    <property type="entry name" value="Fucose_isomerase_N/cen_sf"/>
</dbReference>
<dbReference type="InterPro" id="IPR003762">
    <property type="entry name" value="Lara_isomerase"/>
</dbReference>
<dbReference type="NCBIfam" id="NF002795">
    <property type="entry name" value="PRK02929.1"/>
    <property type="match status" value="1"/>
</dbReference>
<dbReference type="PANTHER" id="PTHR38464">
    <property type="entry name" value="L-ARABINOSE ISOMERASE"/>
    <property type="match status" value="1"/>
</dbReference>
<dbReference type="PANTHER" id="PTHR38464:SF1">
    <property type="entry name" value="L-ARABINOSE ISOMERASE"/>
    <property type="match status" value="1"/>
</dbReference>
<dbReference type="Pfam" id="PF24856">
    <property type="entry name" value="AraA_central"/>
    <property type="match status" value="1"/>
</dbReference>
<dbReference type="Pfam" id="PF02610">
    <property type="entry name" value="AraA_N"/>
    <property type="match status" value="1"/>
</dbReference>
<dbReference type="Pfam" id="PF11762">
    <property type="entry name" value="Arabinose_Iso_C"/>
    <property type="match status" value="1"/>
</dbReference>
<dbReference type="PIRSF" id="PIRSF001478">
    <property type="entry name" value="L-ara_isomerase"/>
    <property type="match status" value="1"/>
</dbReference>
<dbReference type="SUPFAM" id="SSF50443">
    <property type="entry name" value="FucI/AraA C-terminal domain-like"/>
    <property type="match status" value="1"/>
</dbReference>
<dbReference type="SUPFAM" id="SSF53743">
    <property type="entry name" value="FucI/AraA N-terminal and middle domains"/>
    <property type="match status" value="1"/>
</dbReference>
<feature type="chain" id="PRO_1000127614" description="L-arabinose isomerase">
    <location>
        <begin position="1"/>
        <end position="500"/>
    </location>
</feature>
<feature type="binding site" evidence="1">
    <location>
        <position position="306"/>
    </location>
    <ligand>
        <name>Mn(2+)</name>
        <dbReference type="ChEBI" id="CHEBI:29035"/>
    </ligand>
</feature>
<feature type="binding site" evidence="1">
    <location>
        <position position="333"/>
    </location>
    <ligand>
        <name>Mn(2+)</name>
        <dbReference type="ChEBI" id="CHEBI:29035"/>
    </ligand>
</feature>
<feature type="binding site" evidence="1">
    <location>
        <position position="350"/>
    </location>
    <ligand>
        <name>Mn(2+)</name>
        <dbReference type="ChEBI" id="CHEBI:29035"/>
    </ligand>
</feature>
<feature type="binding site" evidence="1">
    <location>
        <position position="450"/>
    </location>
    <ligand>
        <name>Mn(2+)</name>
        <dbReference type="ChEBI" id="CHEBI:29035"/>
    </ligand>
</feature>
<name>ARAA_SALEP</name>
<accession>B5R1T9</accession>
<organism>
    <name type="scientific">Salmonella enteritidis PT4 (strain P125109)</name>
    <dbReference type="NCBI Taxonomy" id="550537"/>
    <lineage>
        <taxon>Bacteria</taxon>
        <taxon>Pseudomonadati</taxon>
        <taxon>Pseudomonadota</taxon>
        <taxon>Gammaproteobacteria</taxon>
        <taxon>Enterobacterales</taxon>
        <taxon>Enterobacteriaceae</taxon>
        <taxon>Salmonella</taxon>
    </lineage>
</organism>
<comment type="function">
    <text evidence="1">Catalyzes the conversion of L-arabinose to L-ribulose.</text>
</comment>
<comment type="catalytic activity">
    <reaction evidence="1">
        <text>beta-L-arabinopyranose = L-ribulose</text>
        <dbReference type="Rhea" id="RHEA:14821"/>
        <dbReference type="ChEBI" id="CHEBI:16880"/>
        <dbReference type="ChEBI" id="CHEBI:40886"/>
        <dbReference type="EC" id="5.3.1.4"/>
    </reaction>
</comment>
<comment type="cofactor">
    <cofactor evidence="1">
        <name>Mn(2+)</name>
        <dbReference type="ChEBI" id="CHEBI:29035"/>
    </cofactor>
    <text evidence="1">Binds 1 Mn(2+) ion per subunit.</text>
</comment>
<comment type="pathway">
    <text evidence="1">Carbohydrate degradation; L-arabinose degradation via L-ribulose; D-xylulose 5-phosphate from L-arabinose (bacterial route): step 1/3.</text>
</comment>
<comment type="subunit">
    <text evidence="1">Homohexamer.</text>
</comment>
<comment type="similarity">
    <text evidence="1">Belongs to the arabinose isomerase family.</text>
</comment>